<gene>
    <name type="primary">catC</name>
    <name type="ordered locus">ACIAD1447</name>
</gene>
<name>CATC_ACIAD</name>
<reference key="1">
    <citation type="journal article" date="1994" name="Gene">
        <title>Unusual G + C content and codon usage in catIJF, a segment of the ben-cat supra-operonic cluster in the Acinetobacter calcoaceticus chromosome.</title>
        <authorList>
            <person name="Shanley M.S."/>
            <person name="Harrison A."/>
            <person name="Parales R.E."/>
            <person name="Kowalchuk G."/>
            <person name="Mitchell D.J."/>
            <person name="Ornston L.N."/>
        </authorList>
    </citation>
    <scope>NUCLEOTIDE SEQUENCE [GENOMIC DNA]</scope>
</reference>
<reference key="2">
    <citation type="journal article" date="2004" name="Nucleic Acids Res.">
        <title>Unique features revealed by the genome sequence of Acinetobacter sp. ADP1, a versatile and naturally transformation competent bacterium.</title>
        <authorList>
            <person name="Barbe V."/>
            <person name="Vallenet D."/>
            <person name="Fonknechten N."/>
            <person name="Kreimeyer A."/>
            <person name="Oztas S."/>
            <person name="Labarre L."/>
            <person name="Cruveiller S."/>
            <person name="Robert C."/>
            <person name="Duprat S."/>
            <person name="Wincker P."/>
            <person name="Ornston L.N."/>
            <person name="Weissenbach J."/>
            <person name="Marliere P."/>
            <person name="Cohen G.N."/>
            <person name="Medigue C."/>
        </authorList>
    </citation>
    <scope>NUCLEOTIDE SEQUENCE [LARGE SCALE GENOMIC DNA]</scope>
    <source>
        <strain>ATCC 33305 / BD413 / ADP1</strain>
    </source>
</reference>
<evidence type="ECO:0000250" key="1"/>
<evidence type="ECO:0000250" key="2">
    <source>
        <dbReference type="UniProtKB" id="P00948"/>
    </source>
</evidence>
<evidence type="ECO:0000305" key="3"/>
<protein>
    <recommendedName>
        <fullName>Muconolactone Delta-isomerase</fullName>
        <shortName>MIase</shortName>
        <ecNumber evidence="2">5.3.3.4</ecNumber>
    </recommendedName>
</protein>
<comment type="catalytic activity">
    <reaction evidence="2">
        <text>(S)-muconolactone = (4,5-dihydro-5-oxofuran-2-yl)-acetate</text>
        <dbReference type="Rhea" id="RHEA:12348"/>
        <dbReference type="ChEBI" id="CHEBI:58425"/>
        <dbReference type="ChEBI" id="CHEBI:58736"/>
        <dbReference type="EC" id="5.3.3.4"/>
    </reaction>
</comment>
<comment type="pathway">
    <text>Aromatic compound metabolism; beta-ketoadipate pathway; 5-oxo-4,5-dihydro-2-furylacetate from catechol: step 3/3.</text>
</comment>
<comment type="subunit">
    <text evidence="1">Homodecamer.</text>
</comment>
<comment type="similarity">
    <text evidence="3">Belongs to the muconolactone Delta-isomerase family.</text>
</comment>
<accession>Q43932</accession>
<keyword id="KW-0058">Aromatic hydrocarbons catabolism</keyword>
<keyword id="KW-0413">Isomerase</keyword>
<feature type="chain" id="PRO_0000089333" description="Muconolactone Delta-isomerase">
    <location>
        <begin position="1"/>
        <end position="96"/>
    </location>
</feature>
<proteinExistence type="inferred from homology"/>
<organism>
    <name type="scientific">Acinetobacter baylyi (strain ATCC 33305 / BD413 / ADP1)</name>
    <dbReference type="NCBI Taxonomy" id="62977"/>
    <lineage>
        <taxon>Bacteria</taxon>
        <taxon>Pseudomonadati</taxon>
        <taxon>Pseudomonadota</taxon>
        <taxon>Gammaproteobacteria</taxon>
        <taxon>Moraxellales</taxon>
        <taxon>Moraxellaceae</taxon>
        <taxon>Acinetobacter</taxon>
    </lineage>
</organism>
<dbReference type="EC" id="5.3.3.4" evidence="2"/>
<dbReference type="EMBL" id="AF009224">
    <property type="protein sequence ID" value="AAC46431.1"/>
    <property type="molecule type" value="Genomic_DNA"/>
</dbReference>
<dbReference type="EMBL" id="CR543861">
    <property type="protein sequence ID" value="CAG68310.1"/>
    <property type="molecule type" value="Genomic_DNA"/>
</dbReference>
<dbReference type="RefSeq" id="WP_004925455.1">
    <property type="nucleotide sequence ID" value="NC_005966.1"/>
</dbReference>
<dbReference type="SMR" id="Q43932"/>
<dbReference type="STRING" id="202950.GCA_001485005_01201"/>
<dbReference type="GeneID" id="67510885"/>
<dbReference type="KEGG" id="aci:ACIAD1447"/>
<dbReference type="eggNOG" id="COG4829">
    <property type="taxonomic scope" value="Bacteria"/>
</dbReference>
<dbReference type="HOGENOM" id="CLU_080702_2_0_6"/>
<dbReference type="OrthoDB" id="2889526at2"/>
<dbReference type="BioCyc" id="ASP62977:ACIAD_RS06685-MONOMER"/>
<dbReference type="UniPathway" id="UPA00157">
    <property type="reaction ID" value="UER00260"/>
</dbReference>
<dbReference type="Proteomes" id="UP000000430">
    <property type="component" value="Chromosome"/>
</dbReference>
<dbReference type="GO" id="GO:0016159">
    <property type="term" value="F:muconolactone delta-isomerase activity"/>
    <property type="evidence" value="ECO:0007669"/>
    <property type="project" value="UniProtKB-EC"/>
</dbReference>
<dbReference type="GO" id="GO:0042952">
    <property type="term" value="P:beta-ketoadipate pathway"/>
    <property type="evidence" value="ECO:0007669"/>
    <property type="project" value="UniProtKB-UniPathway"/>
</dbReference>
<dbReference type="Gene3D" id="3.30.70.1060">
    <property type="entry name" value="Dimeric alpha+beta barrel"/>
    <property type="match status" value="1"/>
</dbReference>
<dbReference type="InterPro" id="IPR011008">
    <property type="entry name" value="Dimeric_a/b-barrel"/>
</dbReference>
<dbReference type="InterPro" id="IPR026029">
    <property type="entry name" value="MLI_dom"/>
</dbReference>
<dbReference type="InterPro" id="IPR003464">
    <property type="entry name" value="Muconolactone_d_Isoase"/>
</dbReference>
<dbReference type="NCBIfam" id="TIGR03221">
    <property type="entry name" value="muco_delta"/>
    <property type="match status" value="1"/>
</dbReference>
<dbReference type="Pfam" id="PF02426">
    <property type="entry name" value="MIase"/>
    <property type="match status" value="1"/>
</dbReference>
<dbReference type="PIRSF" id="PIRSF001486">
    <property type="entry name" value="CatC"/>
    <property type="match status" value="1"/>
</dbReference>
<dbReference type="SUPFAM" id="SSF54909">
    <property type="entry name" value="Dimeric alpha+beta barrel"/>
    <property type="match status" value="1"/>
</dbReference>
<sequence length="96" mass="11287">MLFQVRMDVHLPVSMPTDQANQIKSVEKAYSQELQRQGKWRHIWRITGQYSNISIFDVESNEELHTILQGLPLYPYMKIEVMALNRHPSSVRDDDS</sequence>